<evidence type="ECO:0000255" key="1">
    <source>
        <dbReference type="HAMAP-Rule" id="MF_00057"/>
    </source>
</evidence>
<protein>
    <recommendedName>
        <fullName evidence="1">3-deoxy-manno-octulosonate cytidylyltransferase</fullName>
        <ecNumber evidence="1">2.7.7.38</ecNumber>
    </recommendedName>
    <alternativeName>
        <fullName evidence="1">CMP-2-keto-3-deoxyoctulosonic acid synthase</fullName>
        <shortName evidence="1">CKS</shortName>
        <shortName evidence="1">CMP-KDO synthase</shortName>
    </alternativeName>
</protein>
<keyword id="KW-0963">Cytoplasm</keyword>
<keyword id="KW-0448">Lipopolysaccharide biosynthesis</keyword>
<keyword id="KW-0548">Nucleotidyltransferase</keyword>
<keyword id="KW-1185">Reference proteome</keyword>
<keyword id="KW-0808">Transferase</keyword>
<organism>
    <name type="scientific">Hahella chejuensis (strain KCTC 2396)</name>
    <dbReference type="NCBI Taxonomy" id="349521"/>
    <lineage>
        <taxon>Bacteria</taxon>
        <taxon>Pseudomonadati</taxon>
        <taxon>Pseudomonadota</taxon>
        <taxon>Gammaproteobacteria</taxon>
        <taxon>Oceanospirillales</taxon>
        <taxon>Hahellaceae</taxon>
        <taxon>Hahella</taxon>
    </lineage>
</organism>
<gene>
    <name evidence="1" type="primary">kdsB</name>
    <name type="ordered locus">HCH_02706</name>
</gene>
<reference key="1">
    <citation type="journal article" date="2005" name="Nucleic Acids Res.">
        <title>Genomic blueprint of Hahella chejuensis, a marine microbe producing an algicidal agent.</title>
        <authorList>
            <person name="Jeong H."/>
            <person name="Yim J.H."/>
            <person name="Lee C."/>
            <person name="Choi S.-H."/>
            <person name="Park Y.K."/>
            <person name="Yoon S.H."/>
            <person name="Hur C.-G."/>
            <person name="Kang H.-Y."/>
            <person name="Kim D."/>
            <person name="Lee H.H."/>
            <person name="Park K.H."/>
            <person name="Park S.-H."/>
            <person name="Park H.-S."/>
            <person name="Lee H.K."/>
            <person name="Oh T.K."/>
            <person name="Kim J.F."/>
        </authorList>
    </citation>
    <scope>NUCLEOTIDE SEQUENCE [LARGE SCALE GENOMIC DNA]</scope>
    <source>
        <strain>KCTC 2396</strain>
    </source>
</reference>
<accession>Q2SIN2</accession>
<proteinExistence type="inferred from homology"/>
<sequence length="255" mass="27888">MSAFTIIIPARYGSSRLPGKPLLDIAGKPMIAHVYDRARESLAKRIYVATDDARIAEAVEGFGGSVLMTRADHPSGTDRLAECADTLELDDDEIVVNVQGDEPMLPAELISQVANNLAANPQAGIATLCERIHDRETLFNPNAVKVVKNEAGMALYFSRAPIPWARDYFADADAGLPPTYDFYRHIGIYAYRVGFLRDYVTWGSCPLEGIESLEQLRAMWRGVPIHVDVAAKAPPAGVDTEADLQRVRAVMAKSS</sequence>
<comment type="function">
    <text evidence="1">Activates KDO (a required 8-carbon sugar) for incorporation into bacterial lipopolysaccharide in Gram-negative bacteria.</text>
</comment>
<comment type="catalytic activity">
    <reaction evidence="1">
        <text>3-deoxy-alpha-D-manno-oct-2-ulosonate + CTP = CMP-3-deoxy-beta-D-manno-octulosonate + diphosphate</text>
        <dbReference type="Rhea" id="RHEA:23448"/>
        <dbReference type="ChEBI" id="CHEBI:33019"/>
        <dbReference type="ChEBI" id="CHEBI:37563"/>
        <dbReference type="ChEBI" id="CHEBI:85986"/>
        <dbReference type="ChEBI" id="CHEBI:85987"/>
        <dbReference type="EC" id="2.7.7.38"/>
    </reaction>
</comment>
<comment type="pathway">
    <text evidence="1">Nucleotide-sugar biosynthesis; CMP-3-deoxy-D-manno-octulosonate biosynthesis; CMP-3-deoxy-D-manno-octulosonate from 3-deoxy-D-manno-octulosonate and CTP: step 1/1.</text>
</comment>
<comment type="pathway">
    <text evidence="1">Bacterial outer membrane biogenesis; lipopolysaccharide biosynthesis.</text>
</comment>
<comment type="subcellular location">
    <subcellularLocation>
        <location evidence="1">Cytoplasm</location>
    </subcellularLocation>
</comment>
<comment type="similarity">
    <text evidence="1">Belongs to the KdsB family.</text>
</comment>
<dbReference type="EC" id="2.7.7.38" evidence="1"/>
<dbReference type="EMBL" id="CP000155">
    <property type="protein sequence ID" value="ABC29492.1"/>
    <property type="molecule type" value="Genomic_DNA"/>
</dbReference>
<dbReference type="RefSeq" id="WP_011396561.1">
    <property type="nucleotide sequence ID" value="NC_007645.1"/>
</dbReference>
<dbReference type="SMR" id="Q2SIN2"/>
<dbReference type="STRING" id="349521.HCH_02706"/>
<dbReference type="KEGG" id="hch:HCH_02706"/>
<dbReference type="eggNOG" id="COG1212">
    <property type="taxonomic scope" value="Bacteria"/>
</dbReference>
<dbReference type="HOGENOM" id="CLU_065038_1_0_6"/>
<dbReference type="OrthoDB" id="9815559at2"/>
<dbReference type="UniPathway" id="UPA00030"/>
<dbReference type="UniPathway" id="UPA00358">
    <property type="reaction ID" value="UER00476"/>
</dbReference>
<dbReference type="Proteomes" id="UP000000238">
    <property type="component" value="Chromosome"/>
</dbReference>
<dbReference type="GO" id="GO:0005829">
    <property type="term" value="C:cytosol"/>
    <property type="evidence" value="ECO:0007669"/>
    <property type="project" value="TreeGrafter"/>
</dbReference>
<dbReference type="GO" id="GO:0008690">
    <property type="term" value="F:3-deoxy-manno-octulosonate cytidylyltransferase activity"/>
    <property type="evidence" value="ECO:0007669"/>
    <property type="project" value="UniProtKB-UniRule"/>
</dbReference>
<dbReference type="GO" id="GO:0033468">
    <property type="term" value="P:CMP-keto-3-deoxy-D-manno-octulosonic acid biosynthetic process"/>
    <property type="evidence" value="ECO:0007669"/>
    <property type="project" value="UniProtKB-UniRule"/>
</dbReference>
<dbReference type="GO" id="GO:0009103">
    <property type="term" value="P:lipopolysaccharide biosynthetic process"/>
    <property type="evidence" value="ECO:0007669"/>
    <property type="project" value="UniProtKB-UniRule"/>
</dbReference>
<dbReference type="CDD" id="cd02517">
    <property type="entry name" value="CMP-KDO-Synthetase"/>
    <property type="match status" value="1"/>
</dbReference>
<dbReference type="FunFam" id="3.90.550.10:FF:000011">
    <property type="entry name" value="3-deoxy-manno-octulosonate cytidylyltransferase"/>
    <property type="match status" value="1"/>
</dbReference>
<dbReference type="Gene3D" id="3.90.550.10">
    <property type="entry name" value="Spore Coat Polysaccharide Biosynthesis Protein SpsA, Chain A"/>
    <property type="match status" value="1"/>
</dbReference>
<dbReference type="HAMAP" id="MF_00057">
    <property type="entry name" value="KdsB"/>
    <property type="match status" value="1"/>
</dbReference>
<dbReference type="InterPro" id="IPR003329">
    <property type="entry name" value="Cytidylyl_trans"/>
</dbReference>
<dbReference type="InterPro" id="IPR004528">
    <property type="entry name" value="KdsB"/>
</dbReference>
<dbReference type="InterPro" id="IPR029044">
    <property type="entry name" value="Nucleotide-diphossugar_trans"/>
</dbReference>
<dbReference type="NCBIfam" id="TIGR00466">
    <property type="entry name" value="kdsB"/>
    <property type="match status" value="1"/>
</dbReference>
<dbReference type="NCBIfam" id="NF003950">
    <property type="entry name" value="PRK05450.1-3"/>
    <property type="match status" value="1"/>
</dbReference>
<dbReference type="NCBIfam" id="NF003952">
    <property type="entry name" value="PRK05450.1-5"/>
    <property type="match status" value="1"/>
</dbReference>
<dbReference type="NCBIfam" id="NF009905">
    <property type="entry name" value="PRK13368.1"/>
    <property type="match status" value="1"/>
</dbReference>
<dbReference type="PANTHER" id="PTHR42866">
    <property type="entry name" value="3-DEOXY-MANNO-OCTULOSONATE CYTIDYLYLTRANSFERASE"/>
    <property type="match status" value="1"/>
</dbReference>
<dbReference type="PANTHER" id="PTHR42866:SF2">
    <property type="entry name" value="3-DEOXY-MANNO-OCTULOSONATE CYTIDYLYLTRANSFERASE, MITOCHONDRIAL"/>
    <property type="match status" value="1"/>
</dbReference>
<dbReference type="Pfam" id="PF02348">
    <property type="entry name" value="CTP_transf_3"/>
    <property type="match status" value="1"/>
</dbReference>
<dbReference type="SUPFAM" id="SSF53448">
    <property type="entry name" value="Nucleotide-diphospho-sugar transferases"/>
    <property type="match status" value="1"/>
</dbReference>
<feature type="chain" id="PRO_0000370076" description="3-deoxy-manno-octulosonate cytidylyltransferase">
    <location>
        <begin position="1"/>
        <end position="255"/>
    </location>
</feature>
<name>KDSB_HAHCH</name>